<keyword id="KW-0012">Acyltransferase</keyword>
<keyword id="KW-0903">Direct protein sequencing</keyword>
<keyword id="KW-0876">Taxol biosynthesis</keyword>
<keyword id="KW-0808">Transferase</keyword>
<organism>
    <name type="scientific">Taxus cuspidata</name>
    <name type="common">Japanese yew</name>
    <dbReference type="NCBI Taxonomy" id="99806"/>
    <lineage>
        <taxon>Eukaryota</taxon>
        <taxon>Viridiplantae</taxon>
        <taxon>Streptophyta</taxon>
        <taxon>Embryophyta</taxon>
        <taxon>Tracheophyta</taxon>
        <taxon>Spermatophyta</taxon>
        <taxon>Pinopsida</taxon>
        <taxon>Pinidae</taxon>
        <taxon>Conifers II</taxon>
        <taxon>Cupressales</taxon>
        <taxon>Taxaceae</taxon>
        <taxon>Taxus</taxon>
    </lineage>
</organism>
<name>T5AT_TAXCU</name>
<evidence type="ECO:0000255" key="1"/>
<evidence type="ECO:0000305" key="2"/>
<protein>
    <recommendedName>
        <fullName>Taxadien-5-alpha-ol O-acetyltransferase</fullName>
        <ecNumber>2.3.1.162</ecNumber>
    </recommendedName>
    <alternativeName>
        <fullName>Taxa-4(20),11(12)-dien-5alpha-ol-O-acetyltransferase</fullName>
        <shortName>Taxadienol acetyltransferase</shortName>
    </alternativeName>
</protein>
<proteinExistence type="evidence at protein level"/>
<dbReference type="EC" id="2.3.1.162"/>
<dbReference type="EMBL" id="AF190130">
    <property type="protein sequence ID" value="AAF34254.1"/>
    <property type="molecule type" value="mRNA"/>
</dbReference>
<dbReference type="PIR" id="T52321">
    <property type="entry name" value="T52321"/>
</dbReference>
<dbReference type="SMR" id="Q9M6F0"/>
<dbReference type="KEGG" id="ag:AAF34254"/>
<dbReference type="BRENDA" id="2.3.1.162">
    <property type="organism ID" value="6225"/>
</dbReference>
<dbReference type="UniPathway" id="UPA00842">
    <property type="reaction ID" value="UER00808"/>
</dbReference>
<dbReference type="GO" id="GO:0050638">
    <property type="term" value="F:taxadien-5-alpha-ol O-acetyltransferase activity"/>
    <property type="evidence" value="ECO:0007669"/>
    <property type="project" value="UniProtKB-EC"/>
</dbReference>
<dbReference type="GO" id="GO:0042617">
    <property type="term" value="P:paclitaxel biosynthetic process"/>
    <property type="evidence" value="ECO:0007669"/>
    <property type="project" value="UniProtKB-UniPathway"/>
</dbReference>
<dbReference type="Gene3D" id="3.30.559.10">
    <property type="entry name" value="Chloramphenicol acetyltransferase-like domain"/>
    <property type="match status" value="2"/>
</dbReference>
<dbReference type="InterPro" id="IPR023213">
    <property type="entry name" value="CAT-like_dom_sf"/>
</dbReference>
<dbReference type="InterPro" id="IPR050898">
    <property type="entry name" value="Plant_acyltransferase"/>
</dbReference>
<dbReference type="PANTHER" id="PTHR31147">
    <property type="entry name" value="ACYL TRANSFERASE 4"/>
    <property type="match status" value="1"/>
</dbReference>
<dbReference type="PANTHER" id="PTHR31147:SF1">
    <property type="entry name" value="ACYL TRANSFERASE 4"/>
    <property type="match status" value="1"/>
</dbReference>
<dbReference type="Pfam" id="PF02458">
    <property type="entry name" value="Transferase"/>
    <property type="match status" value="1"/>
</dbReference>
<comment type="catalytic activity">
    <reaction>
        <text>taxa-4(20),11-dien-5alpha-ol + acetyl-CoA = taxa-4(20),11-dien-5alpha-yl acetate + CoA</text>
        <dbReference type="Rhea" id="RHEA:22028"/>
        <dbReference type="ChEBI" id="CHEBI:30038"/>
        <dbReference type="ChEBI" id="CHEBI:30042"/>
        <dbReference type="ChEBI" id="CHEBI:57287"/>
        <dbReference type="ChEBI" id="CHEBI:57288"/>
        <dbReference type="EC" id="2.3.1.162"/>
    </reaction>
</comment>
<comment type="pathway">
    <text>Alkaloid biosynthesis; taxol biosynthesis; 10-deacetyl-2-debenzoylbaccatin III from taxa-4(20),11-dien-5alpha-ol: step 1/3.</text>
</comment>
<comment type="similarity">
    <text evidence="2">Belongs to the plant acyltransferase family.</text>
</comment>
<gene>
    <name type="primary">TAT</name>
</gene>
<accession>Q9M6F0</accession>
<reference key="1">
    <citation type="journal article" date="2000" name="Arch. Biochem. Biophys.">
        <title>Molecular cloning of a taxa-4(20),11(12)-dien-5alpha-ol-O-acetyl transferase cDNA from Taxus and functional expression in Escherichia coli.</title>
        <authorList>
            <person name="Walker K."/>
            <person name="Schoendorf A."/>
            <person name="Croteau R.B."/>
        </authorList>
    </citation>
    <scope>NUCLEOTIDE SEQUENCE [MRNA]</scope>
    <scope>PARTIAL PROTEIN SEQUENCE</scope>
    <scope>CHARACTERIZATION</scope>
</reference>
<feature type="chain" id="PRO_0000147358" description="Taxadien-5-alpha-ol O-acetyltransferase">
    <location>
        <begin position="1"/>
        <end position="439"/>
    </location>
</feature>
<feature type="active site" description="Proton acceptor" evidence="1">
    <location>
        <position position="164"/>
    </location>
</feature>
<feature type="active site" description="Proton acceptor" evidence="1">
    <location>
        <position position="373"/>
    </location>
</feature>
<sequence length="439" mass="49080">MEKTDLHVNLIEKVMVGPSPPLPKTTLQLSSIDNLPGVRGSIFNALLIYNASPSPTMISADPAKPIREALAKILVYYPPFAGRLRETENGDLEVECTGEGAMFLEAMADNELSVLGDFDDSNPSFQQLLFSLPLDTNFKDLSLLVVQVTRFTCGGFVVGVSFHHGVCDGRGAAQFLKGLAEMARGEVKLSLEPIWNRELVKLDDPKYLQFFHFEFLRAPSIVEKIVQTYFIIDFETINYIKQSVMEECKEFCSSFEVASAMTWIARTRAFQIPESEYVKILFGMDMRNSFNPPLPSGYYGNSIGTACAVDNVQDLLSGSLLRAIMIIKKSKVSLNDNFKSRAVVKPSELDVNMNHENVVAFADWSRLGFDEVDFGWGNAVSVSPVQQQSALAMQNYFLFLKPSKNKPDGIKILMFLPLSKMKSFKIEMEAMMKKYVAKV</sequence>